<accession>Q2FVY9</accession>
<keyword id="KW-0010">Activator</keyword>
<keyword id="KW-0963">Cytoplasm</keyword>
<keyword id="KW-0238">DNA-binding</keyword>
<keyword id="KW-1185">Reference proteome</keyword>
<keyword id="KW-0804">Transcription</keyword>
<keyword id="KW-0805">Transcription regulation</keyword>
<keyword id="KW-0843">Virulence</keyword>
<feature type="chain" id="PRO_0000249332" description="HTH-type transcriptional regulator SarV">
    <location>
        <begin position="1"/>
        <end position="116"/>
    </location>
</feature>
<feature type="DNA-binding region" description="H-T-H motif" evidence="1">
    <location>
        <begin position="51"/>
        <end position="74"/>
    </location>
</feature>
<gene>
    <name type="primary">sarV</name>
    <name type="ordered locus">SAOUHSC_02532</name>
</gene>
<comment type="function">
    <text evidence="2">Part of the pathway by which MgrA and SarA control autolysis. Involved in regulation of virulence and autolysis genes such as hla, splA, aur, scp, lrgB, scdA and atl. May also act as an activator for the expression of regulatory genes agr, lytSR and ArlRS.</text>
</comment>
<comment type="subcellular location">
    <subcellularLocation>
        <location evidence="3">Cytoplasm</location>
    </subcellularLocation>
</comment>
<comment type="induction">
    <text>Repressed by SarA and MgrA by binding to the sarV promoter region.</text>
</comment>
<comment type="similarity">
    <text evidence="3">Belongs to the SarA family.</text>
</comment>
<evidence type="ECO:0000255" key="1"/>
<evidence type="ECO:0000269" key="2">
    <source>
    </source>
</evidence>
<evidence type="ECO:0000305" key="3"/>
<organism>
    <name type="scientific">Staphylococcus aureus (strain NCTC 8325 / PS 47)</name>
    <dbReference type="NCBI Taxonomy" id="93061"/>
    <lineage>
        <taxon>Bacteria</taxon>
        <taxon>Bacillati</taxon>
        <taxon>Bacillota</taxon>
        <taxon>Bacilli</taxon>
        <taxon>Bacillales</taxon>
        <taxon>Staphylococcaceae</taxon>
        <taxon>Staphylococcus</taxon>
    </lineage>
</organism>
<sequence length="116" mass="13986">MSNKVQRFIEAERELSQLKHWLKTTHKISIEEFVVLFKVYEAEKISGKELRDTLHFEMLWDTSKIDVIIRKIYKKELISKLRSETDERQVFYFYSTSQKKLLDKITKEIEVLSVTN</sequence>
<reference key="1">
    <citation type="book" date="2006" name="Gram positive pathogens, 2nd edition">
        <title>The Staphylococcus aureus NCTC 8325 genome.</title>
        <editorList>
            <person name="Fischetti V."/>
            <person name="Novick R."/>
            <person name="Ferretti J."/>
            <person name="Portnoy D."/>
            <person name="Rood J."/>
        </editorList>
        <authorList>
            <person name="Gillaspy A.F."/>
            <person name="Worrell V."/>
            <person name="Orvis J."/>
            <person name="Roe B.A."/>
            <person name="Dyer D.W."/>
            <person name="Iandolo J.J."/>
        </authorList>
    </citation>
    <scope>NUCLEOTIDE SEQUENCE [LARGE SCALE GENOMIC DNA]</scope>
    <source>
        <strain>NCTC 8325 / PS 47</strain>
    </source>
</reference>
<reference key="2">
    <citation type="journal article" date="2004" name="J. Bacteriol.">
        <title>Identification of sarV (SA2062), a new transcriptional regulator, is repressed by SarA and MgrA (SA0641) and involved in the regulation of autolysis in Staphylococcus aureus.</title>
        <authorList>
            <person name="Manna A.C."/>
            <person name="Ingavale S.S."/>
            <person name="Maloney M."/>
            <person name="van Wamel W."/>
            <person name="Cheung A.L."/>
        </authorList>
    </citation>
    <scope>FUNCTION</scope>
</reference>
<dbReference type="EMBL" id="CP000253">
    <property type="protein sequence ID" value="ABD31547.1"/>
    <property type="molecule type" value="Genomic_DNA"/>
</dbReference>
<dbReference type="RefSeq" id="WP_000066900.1">
    <property type="nucleotide sequence ID" value="NZ_LS483365.1"/>
</dbReference>
<dbReference type="RefSeq" id="YP_500996.1">
    <property type="nucleotide sequence ID" value="NC_007795.1"/>
</dbReference>
<dbReference type="SMR" id="Q2FVY9"/>
<dbReference type="STRING" id="93061.SAOUHSC_02532"/>
<dbReference type="PaxDb" id="1280-SAXN108_2516"/>
<dbReference type="GeneID" id="3921122"/>
<dbReference type="KEGG" id="sao:SAOUHSC_02532"/>
<dbReference type="PATRIC" id="fig|93061.5.peg.2284"/>
<dbReference type="eggNOG" id="ENOG503057D">
    <property type="taxonomic scope" value="Bacteria"/>
</dbReference>
<dbReference type="HOGENOM" id="CLU_2095367_0_0_9"/>
<dbReference type="OrthoDB" id="2399632at2"/>
<dbReference type="PRO" id="PR:Q2FVY9"/>
<dbReference type="Proteomes" id="UP000008816">
    <property type="component" value="Chromosome"/>
</dbReference>
<dbReference type="GO" id="GO:0005737">
    <property type="term" value="C:cytoplasm"/>
    <property type="evidence" value="ECO:0007669"/>
    <property type="project" value="UniProtKB-SubCell"/>
</dbReference>
<dbReference type="GO" id="GO:0003677">
    <property type="term" value="F:DNA binding"/>
    <property type="evidence" value="ECO:0007669"/>
    <property type="project" value="UniProtKB-KW"/>
</dbReference>
<dbReference type="GO" id="GO:0006355">
    <property type="term" value="P:regulation of DNA-templated transcription"/>
    <property type="evidence" value="ECO:0007669"/>
    <property type="project" value="InterPro"/>
</dbReference>
<dbReference type="Gene3D" id="1.10.10.10">
    <property type="entry name" value="Winged helix-like DNA-binding domain superfamily/Winged helix DNA-binding domain"/>
    <property type="match status" value="1"/>
</dbReference>
<dbReference type="InterPro" id="IPR010166">
    <property type="entry name" value="SarA/Rot_dom"/>
</dbReference>
<dbReference type="InterPro" id="IPR055166">
    <property type="entry name" value="Transc_reg_Sar_Rot_HTH"/>
</dbReference>
<dbReference type="InterPro" id="IPR036388">
    <property type="entry name" value="WH-like_DNA-bd_sf"/>
</dbReference>
<dbReference type="InterPro" id="IPR036390">
    <property type="entry name" value="WH_DNA-bd_sf"/>
</dbReference>
<dbReference type="NCBIfam" id="TIGR01889">
    <property type="entry name" value="Staph_reg_Sar"/>
    <property type="match status" value="1"/>
</dbReference>
<dbReference type="Pfam" id="PF22381">
    <property type="entry name" value="Staph_reg_Sar_Rot"/>
    <property type="match status" value="1"/>
</dbReference>
<dbReference type="SUPFAM" id="SSF46785">
    <property type="entry name" value="Winged helix' DNA-binding domain"/>
    <property type="match status" value="1"/>
</dbReference>
<protein>
    <recommendedName>
        <fullName>HTH-type transcriptional regulator SarV</fullName>
    </recommendedName>
    <alternativeName>
        <fullName>Staphylococcal accessory regulator V</fullName>
    </alternativeName>
</protein>
<proteinExistence type="evidence at transcript level"/>
<name>SARV_STAA8</name>